<comment type="function">
    <text evidence="2">ATP-dependent DNA helicase involved in DNA damage repair by homologous recombination and in genome maintenance. Capable of unwinding D-loops. Plays a role in limiting crossover recombinants during mitotic DNA double-strand break (DSB) repair. Component of a FANCM-MHF complex which promotes gene conversion at blocked replication forks, probably by reversal of the stalled fork.</text>
</comment>
<comment type="catalytic activity">
    <reaction evidence="2">
        <text>ATP + H2O = ADP + phosphate + H(+)</text>
        <dbReference type="Rhea" id="RHEA:13065"/>
        <dbReference type="ChEBI" id="CHEBI:15377"/>
        <dbReference type="ChEBI" id="CHEBI:15378"/>
        <dbReference type="ChEBI" id="CHEBI:30616"/>
        <dbReference type="ChEBI" id="CHEBI:43474"/>
        <dbReference type="ChEBI" id="CHEBI:456216"/>
        <dbReference type="EC" id="3.6.4.12"/>
    </reaction>
</comment>
<comment type="subunit">
    <text evidence="2">Interacts with the MHF histone-fold complex to form the FANCM-MHF complex.</text>
</comment>
<comment type="subcellular location">
    <subcellularLocation>
        <location evidence="1">Nucleus</location>
    </subcellularLocation>
</comment>
<comment type="similarity">
    <text evidence="6">Belongs to the DEAD box helicase family. DEAH subfamily. FANCM sub-subfamily.</text>
</comment>
<gene>
    <name evidence="1" type="primary">mph1</name>
    <name type="ORF">NCU09318</name>
</gene>
<evidence type="ECO:0000250" key="1">
    <source>
        <dbReference type="UniProtKB" id="P40562"/>
    </source>
</evidence>
<evidence type="ECO:0000250" key="2">
    <source>
        <dbReference type="UniProtKB" id="Q9UT23"/>
    </source>
</evidence>
<evidence type="ECO:0000255" key="3">
    <source>
        <dbReference type="PROSITE-ProRule" id="PRU00541"/>
    </source>
</evidence>
<evidence type="ECO:0000255" key="4">
    <source>
        <dbReference type="PROSITE-ProRule" id="PRU00542"/>
    </source>
</evidence>
<evidence type="ECO:0000256" key="5">
    <source>
        <dbReference type="SAM" id="MobiDB-lite"/>
    </source>
</evidence>
<evidence type="ECO:0000305" key="6"/>
<dbReference type="EC" id="3.6.4.12" evidence="1 2"/>
<dbReference type="EMBL" id="CM002236">
    <property type="protein sequence ID" value="EAA34786.1"/>
    <property type="molecule type" value="Genomic_DNA"/>
</dbReference>
<dbReference type="RefSeq" id="XP_964022.1">
    <property type="nucleotide sequence ID" value="XM_958929.3"/>
</dbReference>
<dbReference type="SMR" id="Q7SDF3"/>
<dbReference type="FunCoup" id="Q7SDF3">
    <property type="interactions" value="185"/>
</dbReference>
<dbReference type="STRING" id="367110.Q7SDF3"/>
<dbReference type="PaxDb" id="5141-EFNCRP00000009115"/>
<dbReference type="EnsemblFungi" id="EAA34786">
    <property type="protein sequence ID" value="EAA34786"/>
    <property type="gene ID" value="NCU09318"/>
</dbReference>
<dbReference type="GeneID" id="3880171"/>
<dbReference type="KEGG" id="ncr:NCU09318"/>
<dbReference type="VEuPathDB" id="FungiDB:NCU09318"/>
<dbReference type="HOGENOM" id="CLU_002513_0_1_1"/>
<dbReference type="InParanoid" id="Q7SDF3"/>
<dbReference type="OMA" id="FMMRAIF"/>
<dbReference type="OrthoDB" id="164902at2759"/>
<dbReference type="Proteomes" id="UP000001805">
    <property type="component" value="Chromosome 1, Linkage Group I"/>
</dbReference>
<dbReference type="GO" id="GO:0005634">
    <property type="term" value="C:nucleus"/>
    <property type="evidence" value="ECO:0007669"/>
    <property type="project" value="UniProtKB-SubCell"/>
</dbReference>
<dbReference type="GO" id="GO:0043138">
    <property type="term" value="F:3'-5' DNA helicase activity"/>
    <property type="evidence" value="ECO:0000318"/>
    <property type="project" value="GO_Central"/>
</dbReference>
<dbReference type="GO" id="GO:0005524">
    <property type="term" value="F:ATP binding"/>
    <property type="evidence" value="ECO:0007669"/>
    <property type="project" value="UniProtKB-KW"/>
</dbReference>
<dbReference type="GO" id="GO:0016887">
    <property type="term" value="F:ATP hydrolysis activity"/>
    <property type="evidence" value="ECO:0007669"/>
    <property type="project" value="RHEA"/>
</dbReference>
<dbReference type="GO" id="GO:0000400">
    <property type="term" value="F:four-way junction DNA binding"/>
    <property type="evidence" value="ECO:0000318"/>
    <property type="project" value="GO_Central"/>
</dbReference>
<dbReference type="GO" id="GO:0009378">
    <property type="term" value="F:four-way junction helicase activity"/>
    <property type="evidence" value="ECO:0000318"/>
    <property type="project" value="GO_Central"/>
</dbReference>
<dbReference type="GO" id="GO:0045003">
    <property type="term" value="P:double-strand break repair via synthesis-dependent strand annealing"/>
    <property type="evidence" value="ECO:0000318"/>
    <property type="project" value="GO_Central"/>
</dbReference>
<dbReference type="GO" id="GO:0036297">
    <property type="term" value="P:interstrand cross-link repair"/>
    <property type="evidence" value="ECO:0000318"/>
    <property type="project" value="GO_Central"/>
</dbReference>
<dbReference type="CDD" id="cd18033">
    <property type="entry name" value="DEXDc_FANCM"/>
    <property type="match status" value="1"/>
</dbReference>
<dbReference type="CDD" id="cd12091">
    <property type="entry name" value="FANCM_ID"/>
    <property type="match status" value="1"/>
</dbReference>
<dbReference type="CDD" id="cd18801">
    <property type="entry name" value="SF2_C_FANCM_Hef"/>
    <property type="match status" value="1"/>
</dbReference>
<dbReference type="FunFam" id="3.40.50.300:FF:001992">
    <property type="entry name" value="ATP-dependent RNA helicase, putative"/>
    <property type="match status" value="1"/>
</dbReference>
<dbReference type="FunFam" id="3.40.50.300:FF:000861">
    <property type="entry name" value="Fanconi anemia, complementation group M"/>
    <property type="match status" value="1"/>
</dbReference>
<dbReference type="Gene3D" id="1.20.1320.20">
    <property type="entry name" value="hef helicase domain"/>
    <property type="match status" value="1"/>
</dbReference>
<dbReference type="Gene3D" id="3.40.50.300">
    <property type="entry name" value="P-loop containing nucleotide triphosphate hydrolases"/>
    <property type="match status" value="2"/>
</dbReference>
<dbReference type="InterPro" id="IPR039686">
    <property type="entry name" value="FANCM/Mph1-like_ID"/>
</dbReference>
<dbReference type="InterPro" id="IPR044749">
    <property type="entry name" value="FANCM_DEXDc"/>
</dbReference>
<dbReference type="InterPro" id="IPR006935">
    <property type="entry name" value="Helicase/UvrB_N"/>
</dbReference>
<dbReference type="InterPro" id="IPR014001">
    <property type="entry name" value="Helicase_ATP-bd"/>
</dbReference>
<dbReference type="InterPro" id="IPR001650">
    <property type="entry name" value="Helicase_C-like"/>
</dbReference>
<dbReference type="InterPro" id="IPR027417">
    <property type="entry name" value="P-loop_NTPase"/>
</dbReference>
<dbReference type="PANTHER" id="PTHR14025">
    <property type="entry name" value="FANCONI ANEMIA GROUP M FANCM FAMILY MEMBER"/>
    <property type="match status" value="1"/>
</dbReference>
<dbReference type="PANTHER" id="PTHR14025:SF20">
    <property type="entry name" value="FANCONI ANEMIA GROUP M PROTEIN"/>
    <property type="match status" value="1"/>
</dbReference>
<dbReference type="Pfam" id="PF00271">
    <property type="entry name" value="Helicase_C"/>
    <property type="match status" value="1"/>
</dbReference>
<dbReference type="Pfam" id="PF04851">
    <property type="entry name" value="ResIII"/>
    <property type="match status" value="1"/>
</dbReference>
<dbReference type="SMART" id="SM00487">
    <property type="entry name" value="DEXDc"/>
    <property type="match status" value="1"/>
</dbReference>
<dbReference type="SMART" id="SM00490">
    <property type="entry name" value="HELICc"/>
    <property type="match status" value="1"/>
</dbReference>
<dbReference type="SUPFAM" id="SSF52540">
    <property type="entry name" value="P-loop containing nucleoside triphosphate hydrolases"/>
    <property type="match status" value="1"/>
</dbReference>
<dbReference type="PROSITE" id="PS51192">
    <property type="entry name" value="HELICASE_ATP_BIND_1"/>
    <property type="match status" value="1"/>
</dbReference>
<dbReference type="PROSITE" id="PS51194">
    <property type="entry name" value="HELICASE_CTER"/>
    <property type="match status" value="1"/>
</dbReference>
<sequence>MDDDDFDDIPDEDLMLAFTQATGNITSHHPSNSKQLASSAKPPAQAWPISDSARRIVTPTVSQGQATATGRAKTASKPTTSATTSRPSLAQSSQRKNLRQTTLWGGTLEEDAQPAPQAVSNRPFRADMPPEQPTHHEIDIEEMKTWVYPMNLGPIRDYQFSIVKNGLFNNTLVALPTGLGKTFIAATIMLNYIRWTKTAKAVFVAPTKPLASQQVQACLSIAGIPRSQATLLTGETPPVLREDEWATKRLFFMTPQTLMNDLSKGYADPKSIVLLVIDEAHRATGDYAYVKVVEFLRRFSKSFRILALTATPGSSLEGVQDVIDNLGISHVEIRTEESIDIRQYVHSRDINTITFDPSDEMMEVRDLFSKALKPLVTKLSSQNIYYGRDPMSLTTYGLMKARNDWMAGPGRHVNQGTKFSVIATFAILQSLAHSIKLLNFHGIKPFYNNLAEFRTTEEEKGGKGSKLKRQVLEDENFQKMMDMIEGWMKIDGFLGHPKLEYLCETLVNHFMDAGEGSNTRAIVFSEYRDSAEEIVRILNKQPLIKATVFVGQADSKRSEGMKQKQQIETIEKFKNGAHNVLVATSIGEEGLDIGQVDLIVCYDASASPIRMLQRMGRTGRKRAGNIVLLLMKGKEEDKFNEAKDNYATMQRMICEGSRFTFRHDLSSRIVPRDIRPEVEKKVVEIPLENSQNPELPEPKRSAARMRTKPAKKKFNMPDGVETGFIKASFFGQAGAKTAKPPARPPAPKETDFIAERPKLESILLSTSQENELRRNYTKIPLGHSKVEELDIDWYRHPTSRRVVQKTIHVKHGEYTKRCVKLFRSLAKSQAPANRYTKPYGETDTSSWELIPLPPLADETEGETSRKGQKKRPRLESGQEAEEAEQYAAPKKRQATAKTKSTGVSKQTNKPRARHTALISDCEEGGNEYDGNVDDDEQSRPRNFRSKGRGRGSGRGKKSQPKQGDPNVDYGDDCTRTSDMEMGTDGSDDGADLEDFIVSDGEVTSSLQHRPRGSTSPTTAPDAGSSSLSSKTGRKQQAPDSFASDEDDGDVFGPKFVPVTASAAKGSLPSTARREKPKPFYVPVELPATQDTTDGDDDLPDIEFLSAKRKREGTGTGMRTGSPGHVKVGDTSKGGSGGDQTREKPSGGAASHARARKRTVVMDSDDDQE</sequence>
<name>MPH1_NEUCR</name>
<feature type="chain" id="PRO_0000333378" description="ATP-dependent DNA helicase mph1">
    <location>
        <begin position="1"/>
        <end position="1168"/>
    </location>
</feature>
<feature type="domain" description="Helicase ATP-binding" evidence="3">
    <location>
        <begin position="162"/>
        <end position="330"/>
    </location>
</feature>
<feature type="domain" description="Helicase C-terminal" evidence="4">
    <location>
        <begin position="506"/>
        <end position="665"/>
    </location>
</feature>
<feature type="region of interest" description="Disordered" evidence="5">
    <location>
        <begin position="24"/>
        <end position="132"/>
    </location>
</feature>
<feature type="region of interest" description="Disordered" evidence="5">
    <location>
        <begin position="690"/>
        <end position="717"/>
    </location>
</feature>
<feature type="region of interest" description="Disordered" evidence="5">
    <location>
        <begin position="830"/>
        <end position="1168"/>
    </location>
</feature>
<feature type="short sequence motif" description="DEAH box" evidence="3">
    <location>
        <begin position="278"/>
        <end position="281"/>
    </location>
</feature>
<feature type="compositionally biased region" description="Polar residues" evidence="5">
    <location>
        <begin position="24"/>
        <end position="38"/>
    </location>
</feature>
<feature type="compositionally biased region" description="Polar residues" evidence="5">
    <location>
        <begin position="59"/>
        <end position="68"/>
    </location>
</feature>
<feature type="compositionally biased region" description="Low complexity" evidence="5">
    <location>
        <begin position="71"/>
        <end position="88"/>
    </location>
</feature>
<feature type="compositionally biased region" description="Polar residues" evidence="5">
    <location>
        <begin position="89"/>
        <end position="104"/>
    </location>
</feature>
<feature type="compositionally biased region" description="Basic residues" evidence="5">
    <location>
        <begin position="701"/>
        <end position="714"/>
    </location>
</feature>
<feature type="compositionally biased region" description="Polar residues" evidence="5">
    <location>
        <begin position="895"/>
        <end position="907"/>
    </location>
</feature>
<feature type="compositionally biased region" description="Acidic residues" evidence="5">
    <location>
        <begin position="920"/>
        <end position="936"/>
    </location>
</feature>
<feature type="compositionally biased region" description="Basic residues" evidence="5">
    <location>
        <begin position="941"/>
        <end position="959"/>
    </location>
</feature>
<feature type="compositionally biased region" description="Acidic residues" evidence="5">
    <location>
        <begin position="985"/>
        <end position="996"/>
    </location>
</feature>
<feature type="compositionally biased region" description="Polar residues" evidence="5">
    <location>
        <begin position="1001"/>
        <end position="1030"/>
    </location>
</feature>
<feature type="binding site" evidence="3">
    <location>
        <begin position="175"/>
        <end position="182"/>
    </location>
    <ligand>
        <name>ATP</name>
        <dbReference type="ChEBI" id="CHEBI:30616"/>
    </ligand>
</feature>
<reference key="1">
    <citation type="journal article" date="2003" name="Nature">
        <title>The genome sequence of the filamentous fungus Neurospora crassa.</title>
        <authorList>
            <person name="Galagan J.E."/>
            <person name="Calvo S.E."/>
            <person name="Borkovich K.A."/>
            <person name="Selker E.U."/>
            <person name="Read N.D."/>
            <person name="Jaffe D.B."/>
            <person name="FitzHugh W."/>
            <person name="Ma L.-J."/>
            <person name="Smirnov S."/>
            <person name="Purcell S."/>
            <person name="Rehman B."/>
            <person name="Elkins T."/>
            <person name="Engels R."/>
            <person name="Wang S."/>
            <person name="Nielsen C.B."/>
            <person name="Butler J."/>
            <person name="Endrizzi M."/>
            <person name="Qui D."/>
            <person name="Ianakiev P."/>
            <person name="Bell-Pedersen D."/>
            <person name="Nelson M.A."/>
            <person name="Werner-Washburne M."/>
            <person name="Selitrennikoff C.P."/>
            <person name="Kinsey J.A."/>
            <person name="Braun E.L."/>
            <person name="Zelter A."/>
            <person name="Schulte U."/>
            <person name="Kothe G.O."/>
            <person name="Jedd G."/>
            <person name="Mewes H.-W."/>
            <person name="Staben C."/>
            <person name="Marcotte E."/>
            <person name="Greenberg D."/>
            <person name="Roy A."/>
            <person name="Foley K."/>
            <person name="Naylor J."/>
            <person name="Stange-Thomann N."/>
            <person name="Barrett R."/>
            <person name="Gnerre S."/>
            <person name="Kamal M."/>
            <person name="Kamvysselis M."/>
            <person name="Mauceli E.W."/>
            <person name="Bielke C."/>
            <person name="Rudd S."/>
            <person name="Frishman D."/>
            <person name="Krystofova S."/>
            <person name="Rasmussen C."/>
            <person name="Metzenberg R.L."/>
            <person name="Perkins D.D."/>
            <person name="Kroken S."/>
            <person name="Cogoni C."/>
            <person name="Macino G."/>
            <person name="Catcheside D.E.A."/>
            <person name="Li W."/>
            <person name="Pratt R.J."/>
            <person name="Osmani S.A."/>
            <person name="DeSouza C.P.C."/>
            <person name="Glass N.L."/>
            <person name="Orbach M.J."/>
            <person name="Berglund J.A."/>
            <person name="Voelker R."/>
            <person name="Yarden O."/>
            <person name="Plamann M."/>
            <person name="Seiler S."/>
            <person name="Dunlap J.C."/>
            <person name="Radford A."/>
            <person name="Aramayo R."/>
            <person name="Natvig D.O."/>
            <person name="Alex L.A."/>
            <person name="Mannhaupt G."/>
            <person name="Ebbole D.J."/>
            <person name="Freitag M."/>
            <person name="Paulsen I."/>
            <person name="Sachs M.S."/>
            <person name="Lander E.S."/>
            <person name="Nusbaum C."/>
            <person name="Birren B.W."/>
        </authorList>
    </citation>
    <scope>NUCLEOTIDE SEQUENCE [LARGE SCALE GENOMIC DNA]</scope>
    <source>
        <strain>ATCC 24698 / 74-OR23-1A / CBS 708.71 / DSM 1257 / FGSC 987</strain>
    </source>
</reference>
<accession>Q7SDF3</accession>
<keyword id="KW-0067">ATP-binding</keyword>
<keyword id="KW-0227">DNA damage</keyword>
<keyword id="KW-0234">DNA repair</keyword>
<keyword id="KW-0238">DNA-binding</keyword>
<keyword id="KW-0347">Helicase</keyword>
<keyword id="KW-0378">Hydrolase</keyword>
<keyword id="KW-0547">Nucleotide-binding</keyword>
<keyword id="KW-0539">Nucleus</keyword>
<keyword id="KW-1185">Reference proteome</keyword>
<organism>
    <name type="scientific">Neurospora crassa (strain ATCC 24698 / 74-OR23-1A / CBS 708.71 / DSM 1257 / FGSC 987)</name>
    <dbReference type="NCBI Taxonomy" id="367110"/>
    <lineage>
        <taxon>Eukaryota</taxon>
        <taxon>Fungi</taxon>
        <taxon>Dikarya</taxon>
        <taxon>Ascomycota</taxon>
        <taxon>Pezizomycotina</taxon>
        <taxon>Sordariomycetes</taxon>
        <taxon>Sordariomycetidae</taxon>
        <taxon>Sordariales</taxon>
        <taxon>Sordariaceae</taxon>
        <taxon>Neurospora</taxon>
    </lineage>
</organism>
<protein>
    <recommendedName>
        <fullName evidence="1">ATP-dependent DNA helicase mph1</fullName>
        <ecNumber evidence="1 2">3.6.4.12</ecNumber>
    </recommendedName>
    <alternativeName>
        <fullName evidence="2">FANCM-like protein 1</fullName>
    </alternativeName>
</protein>
<proteinExistence type="inferred from homology"/>